<keyword id="KW-0066">ATP synthesis</keyword>
<keyword id="KW-0997">Cell inner membrane</keyword>
<keyword id="KW-1003">Cell membrane</keyword>
<keyword id="KW-0138">CF(0)</keyword>
<keyword id="KW-0375">Hydrogen ion transport</keyword>
<keyword id="KW-0406">Ion transport</keyword>
<keyword id="KW-0472">Membrane</keyword>
<keyword id="KW-0812">Transmembrane</keyword>
<keyword id="KW-1133">Transmembrane helix</keyword>
<keyword id="KW-0813">Transport</keyword>
<accession>Q986D4</accession>
<proteinExistence type="inferred from homology"/>
<sequence length="252" mass="27169">MAADKVDPIHQFHIIKLVPINIGGYDLSFTNSALFMVATVVVAAAFLFLTTSSRSLVPGRLQSISEMAYEFVANMLRDAAGTQGMKFFPLVFSLFMFVLVANLLGLFPYFFTVTSHIIVTFGLAILVIGTVIVYGFMKHGLGFLKLFVPKGVPLVMMVLVVPIEVISFVSRPISLSVRLFANMLAGHITLKVFSGFVVSLSALGAVGVAGSILPLAMAVALTALELLVAFLQAYVFAVLTCMYLNDALHPSH</sequence>
<organism>
    <name type="scientific">Mesorhizobium japonicum (strain LMG 29417 / CECT 9101 / MAFF 303099)</name>
    <name type="common">Mesorhizobium loti (strain MAFF 303099)</name>
    <dbReference type="NCBI Taxonomy" id="266835"/>
    <lineage>
        <taxon>Bacteria</taxon>
        <taxon>Pseudomonadati</taxon>
        <taxon>Pseudomonadota</taxon>
        <taxon>Alphaproteobacteria</taxon>
        <taxon>Hyphomicrobiales</taxon>
        <taxon>Phyllobacteriaceae</taxon>
        <taxon>Mesorhizobium</taxon>
    </lineage>
</organism>
<feature type="chain" id="PRO_0000362411" description="ATP synthase subunit a">
    <location>
        <begin position="1"/>
        <end position="252"/>
    </location>
</feature>
<feature type="transmembrane region" description="Helical" evidence="1">
    <location>
        <begin position="29"/>
        <end position="49"/>
    </location>
</feature>
<feature type="transmembrane region" description="Helical" evidence="1">
    <location>
        <begin position="87"/>
        <end position="107"/>
    </location>
</feature>
<feature type="transmembrane region" description="Helical" evidence="1">
    <location>
        <begin position="117"/>
        <end position="137"/>
    </location>
</feature>
<feature type="transmembrane region" description="Helical" evidence="1">
    <location>
        <begin position="146"/>
        <end position="166"/>
    </location>
</feature>
<feature type="transmembrane region" description="Helical" evidence="1">
    <location>
        <begin position="188"/>
        <end position="208"/>
    </location>
</feature>
<feature type="transmembrane region" description="Helical" evidence="1">
    <location>
        <begin position="211"/>
        <end position="231"/>
    </location>
</feature>
<comment type="function">
    <text evidence="1">Key component of the proton channel; it plays a direct role in the translocation of protons across the membrane.</text>
</comment>
<comment type="subunit">
    <text evidence="1">F-type ATPases have 2 components, CF(1) - the catalytic core - and CF(0) - the membrane proton channel. CF(1) has five subunits: alpha(3), beta(3), gamma(1), delta(1), epsilon(1). CF(0) has three main subunits: a(1), b(2) and c(9-12). The alpha and beta chains form an alternating ring which encloses part of the gamma chain. CF(1) is attached to CF(0) by a central stalk formed by the gamma and epsilon chains, while a peripheral stalk is formed by the delta and b chains.</text>
</comment>
<comment type="subcellular location">
    <subcellularLocation>
        <location evidence="1">Cell inner membrane</location>
        <topology evidence="1">Multi-pass membrane protein</topology>
    </subcellularLocation>
</comment>
<comment type="similarity">
    <text evidence="1">Belongs to the ATPase A chain family.</text>
</comment>
<reference key="1">
    <citation type="journal article" date="2000" name="DNA Res.">
        <title>Complete genome structure of the nitrogen-fixing symbiotic bacterium Mesorhizobium loti.</title>
        <authorList>
            <person name="Kaneko T."/>
            <person name="Nakamura Y."/>
            <person name="Sato S."/>
            <person name="Asamizu E."/>
            <person name="Kato T."/>
            <person name="Sasamoto S."/>
            <person name="Watanabe A."/>
            <person name="Idesawa K."/>
            <person name="Ishikawa A."/>
            <person name="Kawashima K."/>
            <person name="Kimura T."/>
            <person name="Kishida Y."/>
            <person name="Kiyokawa C."/>
            <person name="Kohara M."/>
            <person name="Matsumoto M."/>
            <person name="Matsuno A."/>
            <person name="Mochizuki Y."/>
            <person name="Nakayama S."/>
            <person name="Nakazaki N."/>
            <person name="Shimpo S."/>
            <person name="Sugimoto M."/>
            <person name="Takeuchi C."/>
            <person name="Yamada M."/>
            <person name="Tabata S."/>
        </authorList>
    </citation>
    <scope>NUCLEOTIDE SEQUENCE [LARGE SCALE GENOMIC DNA]</scope>
    <source>
        <strain>LMG 29417 / CECT 9101 / MAFF 303099</strain>
    </source>
</reference>
<protein>
    <recommendedName>
        <fullName evidence="1">ATP synthase subunit a</fullName>
    </recommendedName>
    <alternativeName>
        <fullName evidence="1">ATP synthase F0 sector subunit a</fullName>
    </alternativeName>
    <alternativeName>
        <fullName evidence="1">F-ATPase subunit 6</fullName>
    </alternativeName>
</protein>
<gene>
    <name evidence="1" type="primary">atpB</name>
    <name type="ordered locus">mlr7411</name>
</gene>
<evidence type="ECO:0000255" key="1">
    <source>
        <dbReference type="HAMAP-Rule" id="MF_01393"/>
    </source>
</evidence>
<dbReference type="EMBL" id="BA000012">
    <property type="protein sequence ID" value="BAB53519.1"/>
    <property type="molecule type" value="Genomic_DNA"/>
</dbReference>
<dbReference type="RefSeq" id="WP_010914826.1">
    <property type="nucleotide sequence ID" value="NC_002678.2"/>
</dbReference>
<dbReference type="SMR" id="Q986D4"/>
<dbReference type="KEGG" id="mlo:mlr7411"/>
<dbReference type="PATRIC" id="fig|266835.9.peg.5916"/>
<dbReference type="eggNOG" id="COG0356">
    <property type="taxonomic scope" value="Bacteria"/>
</dbReference>
<dbReference type="HOGENOM" id="CLU_041018_0_2_5"/>
<dbReference type="Proteomes" id="UP000000552">
    <property type="component" value="Chromosome"/>
</dbReference>
<dbReference type="GO" id="GO:0005886">
    <property type="term" value="C:plasma membrane"/>
    <property type="evidence" value="ECO:0007669"/>
    <property type="project" value="UniProtKB-SubCell"/>
</dbReference>
<dbReference type="GO" id="GO:0045259">
    <property type="term" value="C:proton-transporting ATP synthase complex"/>
    <property type="evidence" value="ECO:0007669"/>
    <property type="project" value="UniProtKB-KW"/>
</dbReference>
<dbReference type="GO" id="GO:0046933">
    <property type="term" value="F:proton-transporting ATP synthase activity, rotational mechanism"/>
    <property type="evidence" value="ECO:0007669"/>
    <property type="project" value="UniProtKB-UniRule"/>
</dbReference>
<dbReference type="CDD" id="cd00310">
    <property type="entry name" value="ATP-synt_Fo_a_6"/>
    <property type="match status" value="1"/>
</dbReference>
<dbReference type="FunFam" id="1.20.120.220:FF:000003">
    <property type="entry name" value="ATP synthase subunit a"/>
    <property type="match status" value="1"/>
</dbReference>
<dbReference type="Gene3D" id="1.20.120.220">
    <property type="entry name" value="ATP synthase, F0 complex, subunit A"/>
    <property type="match status" value="1"/>
</dbReference>
<dbReference type="HAMAP" id="MF_01393">
    <property type="entry name" value="ATP_synth_a_bact"/>
    <property type="match status" value="1"/>
</dbReference>
<dbReference type="InterPro" id="IPR000568">
    <property type="entry name" value="ATP_synth_F0_asu"/>
</dbReference>
<dbReference type="InterPro" id="IPR023011">
    <property type="entry name" value="ATP_synth_F0_asu_AS"/>
</dbReference>
<dbReference type="InterPro" id="IPR045083">
    <property type="entry name" value="ATP_synth_F0_asu_bact/mt"/>
</dbReference>
<dbReference type="InterPro" id="IPR035908">
    <property type="entry name" value="F0_ATP_A_sf"/>
</dbReference>
<dbReference type="NCBIfam" id="TIGR01131">
    <property type="entry name" value="ATP_synt_6_or_A"/>
    <property type="match status" value="1"/>
</dbReference>
<dbReference type="NCBIfam" id="NF004482">
    <property type="entry name" value="PRK05815.2-4"/>
    <property type="match status" value="1"/>
</dbReference>
<dbReference type="PANTHER" id="PTHR11410">
    <property type="entry name" value="ATP SYNTHASE SUBUNIT A"/>
    <property type="match status" value="1"/>
</dbReference>
<dbReference type="PANTHER" id="PTHR11410:SF0">
    <property type="entry name" value="ATP SYNTHASE SUBUNIT A"/>
    <property type="match status" value="1"/>
</dbReference>
<dbReference type="Pfam" id="PF00119">
    <property type="entry name" value="ATP-synt_A"/>
    <property type="match status" value="1"/>
</dbReference>
<dbReference type="PRINTS" id="PR00123">
    <property type="entry name" value="ATPASEA"/>
</dbReference>
<dbReference type="SUPFAM" id="SSF81336">
    <property type="entry name" value="F1F0 ATP synthase subunit A"/>
    <property type="match status" value="1"/>
</dbReference>
<dbReference type="PROSITE" id="PS00449">
    <property type="entry name" value="ATPASE_A"/>
    <property type="match status" value="1"/>
</dbReference>
<name>ATP6_RHILO</name>